<protein>
    <recommendedName>
        <fullName>Chaperone protein DnaK</fullName>
    </recommendedName>
    <alternativeName>
        <fullName>70 kDa antigen</fullName>
    </alternativeName>
    <alternativeName>
        <fullName>HSP70</fullName>
    </alternativeName>
    <alternativeName>
        <fullName>Heat shock 70 kDa protein</fullName>
    </alternativeName>
    <alternativeName>
        <fullName>Heat shock protein 70</fullName>
    </alternativeName>
</protein>
<gene>
    <name type="primary">dnaK</name>
    <name type="ordered locus">ML2496</name>
</gene>
<organism>
    <name type="scientific">Mycobacterium leprae (strain TN)</name>
    <dbReference type="NCBI Taxonomy" id="272631"/>
    <lineage>
        <taxon>Bacteria</taxon>
        <taxon>Bacillati</taxon>
        <taxon>Actinomycetota</taxon>
        <taxon>Actinomycetes</taxon>
        <taxon>Mycobacteriales</taxon>
        <taxon>Mycobacteriaceae</taxon>
        <taxon>Mycobacterium</taxon>
    </lineage>
</organism>
<comment type="function">
    <text evidence="1">Acts as a chaperone.</text>
</comment>
<comment type="induction">
    <text evidence="1">By stress conditions e.g. heat shock (By similarity).</text>
</comment>
<comment type="similarity">
    <text evidence="4">Belongs to the heat shock protein 70 family.</text>
</comment>
<accession>P19993</accession>
<reference key="1">
    <citation type="journal article" date="1991" name="J. Immunol.">
        <title>Sequence and immunogenicity of the 70-kDa heat shock protein of Mycobacterium leprae.</title>
        <authorList>
            <person name="McKenzie K.R."/>
            <person name="Adams E."/>
            <person name="Britton W.J."/>
            <person name="Garsia R.J."/>
            <person name="Basten A."/>
        </authorList>
    </citation>
    <scope>NUCLEOTIDE SEQUENCE [GENOMIC DNA]</scope>
</reference>
<reference key="2">
    <citation type="journal article" date="2001" name="Nature">
        <title>Massive gene decay in the leprosy bacillus.</title>
        <authorList>
            <person name="Cole S.T."/>
            <person name="Eiglmeier K."/>
            <person name="Parkhill J."/>
            <person name="James K.D."/>
            <person name="Thomson N.R."/>
            <person name="Wheeler P.R."/>
            <person name="Honore N."/>
            <person name="Garnier T."/>
            <person name="Churcher C.M."/>
            <person name="Harris D.E."/>
            <person name="Mungall K.L."/>
            <person name="Basham D."/>
            <person name="Brown D."/>
            <person name="Chillingworth T."/>
            <person name="Connor R."/>
            <person name="Davies R.M."/>
            <person name="Devlin K."/>
            <person name="Duthoy S."/>
            <person name="Feltwell T."/>
            <person name="Fraser A."/>
            <person name="Hamlin N."/>
            <person name="Holroyd S."/>
            <person name="Hornsby T."/>
            <person name="Jagels K."/>
            <person name="Lacroix C."/>
            <person name="Maclean J."/>
            <person name="Moule S."/>
            <person name="Murphy L.D."/>
            <person name="Oliver K."/>
            <person name="Quail M.A."/>
            <person name="Rajandream M.A."/>
            <person name="Rutherford K.M."/>
            <person name="Rutter S."/>
            <person name="Seeger K."/>
            <person name="Simon S."/>
            <person name="Simmonds M."/>
            <person name="Skelton J."/>
            <person name="Squares R."/>
            <person name="Squares S."/>
            <person name="Stevens K."/>
            <person name="Taylor K."/>
            <person name="Whitehead S."/>
            <person name="Woodward J.R."/>
            <person name="Barrell B.G."/>
        </authorList>
    </citation>
    <scope>NUCLEOTIDE SEQUENCE [LARGE SCALE GENOMIC DNA]</scope>
    <source>
        <strain>TN</strain>
    </source>
</reference>
<reference key="3">
    <citation type="journal article" date="1989" name="Infect. Immun.">
        <title>Homology of the 70-kilodalton antigens from Mycobacterium leprae and Mycobacterium bovis with the Mycobacterium tuberculosis 71-kilodalton antigen and with the conserved heat shock protein 70 of eucaryotes.</title>
        <authorList>
            <person name="Garsia R.J."/>
            <person name="Hellqvist L."/>
            <person name="Booth R.J."/>
            <person name="Radford A.J."/>
            <person name="Britton W.J."/>
            <person name="Astbury L."/>
            <person name="Trent R.J."/>
            <person name="Basten A."/>
        </authorList>
    </citation>
    <scope>NUCLEOTIDE SEQUENCE [GENOMIC DNA] OF 277-620</scope>
</reference>
<reference key="4">
    <citation type="journal article" date="1998" name="Biochim. Biophys. Acta">
        <title>Phosphorylation of Mycobacterium leprae heat-shock 70 protein at threonine 175 alters its substrate binding characteristics.</title>
        <authorList>
            <person name="Peake P."/>
            <person name="Winter N."/>
            <person name="Britton W."/>
        </authorList>
    </citation>
    <scope>PHOSPHORYLATION AT THR-175</scope>
</reference>
<name>DNAK_MYCLE</name>
<sequence>MARAVGIDLGTTNSVVSVLEGGDPVVVANSEGSRTTPSTVAFARNGEVLVGQPAKNQAVTNVDRTIRSVKRHMGSDWSIEIDGKKYTAQEISARVLMKLKRDAEAYLGEDITDAVITTPAYFNDAQRQATKEAGQIAGLNVLRIVNEPTAAALAYGLDKGEREQTILVFDLGGGTFDVSLLEIGEGVVEVRATSGDNHLGGDDWDDRIVNWLVDKFKGTSGIDLTKDKMAMQRLREAAEKAKIELSSSQSTSVNLPYITVDSDKNPLFLDEQLIRAEFQRITQDLLDRTRQPFQSVVKDAGISVSEIDHVVLVGGSTRMPAVTDLVKELTGGKEPNKGVNPDEVVAVGAALQAGVLKGEVKDVLLLDVTPLSLGIETKGGVMTKLIERNTTIPTKRSETFTTADDNQPSVQIQVYQGEREIASHNKLLGSFELTGIPPAPRGVPQIEVTFDIDANGIVHVTAKDKGTGKENTIKIQEGSGLSKEEIDRMVKDAEAHAEEDRKRREEADVRNQAETLVYQTEKFVKEQRETENGSRVPEDTLNKVEAAVAEAKTALGGTDISAIKSAMEKLGQDSQALGQAIYEATQAASKVGGEASAPGGSNSTDDVVDAEVVDDERESK</sequence>
<feature type="initiator methionine" description="Removed" evidence="1">
    <location>
        <position position="1"/>
    </location>
</feature>
<feature type="chain" id="PRO_0000078493" description="Chaperone protein DnaK">
    <location>
        <begin position="2"/>
        <end position="620"/>
    </location>
</feature>
<feature type="region of interest" description="Disordered" evidence="2">
    <location>
        <begin position="588"/>
        <end position="620"/>
    </location>
</feature>
<feature type="compositionally biased region" description="Acidic residues" evidence="2">
    <location>
        <begin position="606"/>
        <end position="620"/>
    </location>
</feature>
<feature type="modified residue" description="Phosphothreonine; by autocatalysis" evidence="3">
    <location>
        <position position="175"/>
    </location>
</feature>
<feature type="sequence conflict" description="In Ref. 1; AAA25362." evidence="4" ref="1">
    <original>P</original>
    <variation>PP</variation>
    <location>
        <position position="370"/>
    </location>
</feature>
<feature type="sequence conflict" description="In Ref. 1 and 3." evidence="4" ref="1 3">
    <original>VDAEVVDDERES</original>
    <variation>LTRRWSTTNGSP</variation>
    <location>
        <begin position="608"/>
        <end position="619"/>
    </location>
</feature>
<proteinExistence type="evidence at protein level"/>
<keyword id="KW-0067">ATP-binding</keyword>
<keyword id="KW-0143">Chaperone</keyword>
<keyword id="KW-0547">Nucleotide-binding</keyword>
<keyword id="KW-0597">Phosphoprotein</keyword>
<keyword id="KW-1185">Reference proteome</keyword>
<keyword id="KW-0346">Stress response</keyword>
<dbReference type="EMBL" id="M95576">
    <property type="protein sequence ID" value="AAA25362.1"/>
    <property type="molecule type" value="Genomic_DNA"/>
</dbReference>
<dbReference type="EMBL" id="AL583925">
    <property type="protein sequence ID" value="CAC32013.1"/>
    <property type="molecule type" value="Genomic_DNA"/>
</dbReference>
<dbReference type="PIR" id="E87221">
    <property type="entry name" value="E87221"/>
</dbReference>
<dbReference type="RefSeq" id="NP_302613.1">
    <property type="nucleotide sequence ID" value="NC_002677.1"/>
</dbReference>
<dbReference type="RefSeq" id="WP_010908932.1">
    <property type="nucleotide sequence ID" value="NC_002677.1"/>
</dbReference>
<dbReference type="SMR" id="P19993"/>
<dbReference type="STRING" id="272631.gene:17576360"/>
<dbReference type="iPTMnet" id="P19993"/>
<dbReference type="KEGG" id="mle:ML2496"/>
<dbReference type="PATRIC" id="fig|272631.5.peg.4791"/>
<dbReference type="Leproma" id="ML2496"/>
<dbReference type="eggNOG" id="COG0443">
    <property type="taxonomic scope" value="Bacteria"/>
</dbReference>
<dbReference type="HOGENOM" id="CLU_005965_2_1_11"/>
<dbReference type="OrthoDB" id="9766019at2"/>
<dbReference type="Proteomes" id="UP000000806">
    <property type="component" value="Chromosome"/>
</dbReference>
<dbReference type="GO" id="GO:0005524">
    <property type="term" value="F:ATP binding"/>
    <property type="evidence" value="ECO:0007669"/>
    <property type="project" value="UniProtKB-UniRule"/>
</dbReference>
<dbReference type="GO" id="GO:0140662">
    <property type="term" value="F:ATP-dependent protein folding chaperone"/>
    <property type="evidence" value="ECO:0007669"/>
    <property type="project" value="InterPro"/>
</dbReference>
<dbReference type="GO" id="GO:0051082">
    <property type="term" value="F:unfolded protein binding"/>
    <property type="evidence" value="ECO:0007669"/>
    <property type="project" value="InterPro"/>
</dbReference>
<dbReference type="CDD" id="cd10234">
    <property type="entry name" value="ASKHA_NBD_HSP70_DnaK-like"/>
    <property type="match status" value="1"/>
</dbReference>
<dbReference type="FunFam" id="2.60.34.10:FF:000014">
    <property type="entry name" value="Chaperone protein DnaK HSP70"/>
    <property type="match status" value="1"/>
</dbReference>
<dbReference type="FunFam" id="1.20.1270.10:FF:000001">
    <property type="entry name" value="Molecular chaperone DnaK"/>
    <property type="match status" value="1"/>
</dbReference>
<dbReference type="FunFam" id="3.30.420.40:FF:000071">
    <property type="entry name" value="Molecular chaperone DnaK"/>
    <property type="match status" value="1"/>
</dbReference>
<dbReference type="FunFam" id="3.90.640.10:FF:000003">
    <property type="entry name" value="Molecular chaperone DnaK"/>
    <property type="match status" value="1"/>
</dbReference>
<dbReference type="Gene3D" id="1.20.1270.10">
    <property type="match status" value="1"/>
</dbReference>
<dbReference type="Gene3D" id="3.30.30.30">
    <property type="match status" value="1"/>
</dbReference>
<dbReference type="Gene3D" id="3.30.420.40">
    <property type="match status" value="3"/>
</dbReference>
<dbReference type="Gene3D" id="3.90.640.10">
    <property type="entry name" value="Actin, Chain A, domain 4"/>
    <property type="match status" value="1"/>
</dbReference>
<dbReference type="Gene3D" id="2.60.34.10">
    <property type="entry name" value="Substrate Binding Domain Of DNAk, Chain A, domain 1"/>
    <property type="match status" value="1"/>
</dbReference>
<dbReference type="HAMAP" id="MF_00332">
    <property type="entry name" value="DnaK"/>
    <property type="match status" value="1"/>
</dbReference>
<dbReference type="InterPro" id="IPR043129">
    <property type="entry name" value="ATPase_NBD"/>
</dbReference>
<dbReference type="InterPro" id="IPR012725">
    <property type="entry name" value="Chaperone_DnaK"/>
</dbReference>
<dbReference type="InterPro" id="IPR018181">
    <property type="entry name" value="Heat_shock_70_CS"/>
</dbReference>
<dbReference type="InterPro" id="IPR029048">
    <property type="entry name" value="HSP70_C_sf"/>
</dbReference>
<dbReference type="InterPro" id="IPR029047">
    <property type="entry name" value="HSP70_peptide-bd_sf"/>
</dbReference>
<dbReference type="InterPro" id="IPR013126">
    <property type="entry name" value="Hsp_70_fam"/>
</dbReference>
<dbReference type="NCBIfam" id="NF001413">
    <property type="entry name" value="PRK00290.1"/>
    <property type="match status" value="1"/>
</dbReference>
<dbReference type="NCBIfam" id="TIGR02350">
    <property type="entry name" value="prok_dnaK"/>
    <property type="match status" value="1"/>
</dbReference>
<dbReference type="PANTHER" id="PTHR19375">
    <property type="entry name" value="HEAT SHOCK PROTEIN 70KDA"/>
    <property type="match status" value="1"/>
</dbReference>
<dbReference type="Pfam" id="PF00012">
    <property type="entry name" value="HSP70"/>
    <property type="match status" value="1"/>
</dbReference>
<dbReference type="PRINTS" id="PR00301">
    <property type="entry name" value="HEATSHOCK70"/>
</dbReference>
<dbReference type="SUPFAM" id="SSF53067">
    <property type="entry name" value="Actin-like ATPase domain"/>
    <property type="match status" value="2"/>
</dbReference>
<dbReference type="SUPFAM" id="SSF100934">
    <property type="entry name" value="Heat shock protein 70kD (HSP70), C-terminal subdomain"/>
    <property type="match status" value="1"/>
</dbReference>
<dbReference type="SUPFAM" id="SSF100920">
    <property type="entry name" value="Heat shock protein 70kD (HSP70), peptide-binding domain"/>
    <property type="match status" value="1"/>
</dbReference>
<dbReference type="PROSITE" id="PS00297">
    <property type="entry name" value="HSP70_1"/>
    <property type="match status" value="1"/>
</dbReference>
<dbReference type="PROSITE" id="PS00329">
    <property type="entry name" value="HSP70_2"/>
    <property type="match status" value="1"/>
</dbReference>
<dbReference type="PROSITE" id="PS01036">
    <property type="entry name" value="HSP70_3"/>
    <property type="match status" value="1"/>
</dbReference>
<evidence type="ECO:0000250" key="1"/>
<evidence type="ECO:0000256" key="2">
    <source>
        <dbReference type="SAM" id="MobiDB-lite"/>
    </source>
</evidence>
<evidence type="ECO:0000269" key="3">
    <source>
    </source>
</evidence>
<evidence type="ECO:0000305" key="4"/>